<gene>
    <name evidence="1" type="primary">iscR</name>
    <name type="ordered locus">ECUMN_2851</name>
</gene>
<proteinExistence type="inferred from homology"/>
<comment type="function">
    <text evidence="1">Regulates the transcription of several operons and genes involved in the biogenesis of Fe-S clusters and Fe-S-containing proteins.</text>
</comment>
<comment type="cofactor">
    <cofactor evidence="1">
        <name>[2Fe-2S] cluster</name>
        <dbReference type="ChEBI" id="CHEBI:190135"/>
    </cofactor>
    <text evidence="1">Binds 1 [2Fe-2S] cluster.</text>
</comment>
<feature type="chain" id="PRO_1000138098" description="HTH-type transcriptional regulator IscR">
    <location>
        <begin position="1"/>
        <end position="162"/>
    </location>
</feature>
<feature type="domain" description="HTH rrf2-type" evidence="1">
    <location>
        <begin position="2"/>
        <end position="131"/>
    </location>
</feature>
<feature type="DNA-binding region" description="H-T-H motif" evidence="1">
    <location>
        <begin position="28"/>
        <end position="51"/>
    </location>
</feature>
<feature type="region of interest" description="Disordered" evidence="2">
    <location>
        <begin position="140"/>
        <end position="162"/>
    </location>
</feature>
<feature type="compositionally biased region" description="Basic and acidic residues" evidence="2">
    <location>
        <begin position="143"/>
        <end position="162"/>
    </location>
</feature>
<feature type="binding site" evidence="1">
    <location>
        <position position="92"/>
    </location>
    <ligand>
        <name>[2Fe-2S] cluster</name>
        <dbReference type="ChEBI" id="CHEBI:190135"/>
    </ligand>
</feature>
<feature type="binding site" evidence="1">
    <location>
        <position position="98"/>
    </location>
    <ligand>
        <name>[2Fe-2S] cluster</name>
        <dbReference type="ChEBI" id="CHEBI:190135"/>
    </ligand>
</feature>
<feature type="binding site" evidence="1">
    <location>
        <position position="104"/>
    </location>
    <ligand>
        <name>[2Fe-2S] cluster</name>
        <dbReference type="ChEBI" id="CHEBI:190135"/>
    </ligand>
</feature>
<name>ISCR_ECOLU</name>
<reference key="1">
    <citation type="journal article" date="2009" name="PLoS Genet.">
        <title>Organised genome dynamics in the Escherichia coli species results in highly diverse adaptive paths.</title>
        <authorList>
            <person name="Touchon M."/>
            <person name="Hoede C."/>
            <person name="Tenaillon O."/>
            <person name="Barbe V."/>
            <person name="Baeriswyl S."/>
            <person name="Bidet P."/>
            <person name="Bingen E."/>
            <person name="Bonacorsi S."/>
            <person name="Bouchier C."/>
            <person name="Bouvet O."/>
            <person name="Calteau A."/>
            <person name="Chiapello H."/>
            <person name="Clermont O."/>
            <person name="Cruveiller S."/>
            <person name="Danchin A."/>
            <person name="Diard M."/>
            <person name="Dossat C."/>
            <person name="Karoui M.E."/>
            <person name="Frapy E."/>
            <person name="Garry L."/>
            <person name="Ghigo J.M."/>
            <person name="Gilles A.M."/>
            <person name="Johnson J."/>
            <person name="Le Bouguenec C."/>
            <person name="Lescat M."/>
            <person name="Mangenot S."/>
            <person name="Martinez-Jehanne V."/>
            <person name="Matic I."/>
            <person name="Nassif X."/>
            <person name="Oztas S."/>
            <person name="Petit M.A."/>
            <person name="Pichon C."/>
            <person name="Rouy Z."/>
            <person name="Ruf C.S."/>
            <person name="Schneider D."/>
            <person name="Tourret J."/>
            <person name="Vacherie B."/>
            <person name="Vallenet D."/>
            <person name="Medigue C."/>
            <person name="Rocha E.P.C."/>
            <person name="Denamur E."/>
        </authorList>
    </citation>
    <scope>NUCLEOTIDE SEQUENCE [LARGE SCALE GENOMIC DNA]</scope>
    <source>
        <strain>UMN026 / ExPEC</strain>
    </source>
</reference>
<organism>
    <name type="scientific">Escherichia coli O17:K52:H18 (strain UMN026 / ExPEC)</name>
    <dbReference type="NCBI Taxonomy" id="585056"/>
    <lineage>
        <taxon>Bacteria</taxon>
        <taxon>Pseudomonadati</taxon>
        <taxon>Pseudomonadota</taxon>
        <taxon>Gammaproteobacteria</taxon>
        <taxon>Enterobacterales</taxon>
        <taxon>Enterobacteriaceae</taxon>
        <taxon>Escherichia</taxon>
    </lineage>
</organism>
<evidence type="ECO:0000255" key="1">
    <source>
        <dbReference type="HAMAP-Rule" id="MF_01176"/>
    </source>
</evidence>
<evidence type="ECO:0000256" key="2">
    <source>
        <dbReference type="SAM" id="MobiDB-lite"/>
    </source>
</evidence>
<accession>B7N6B8</accession>
<dbReference type="EMBL" id="CU928163">
    <property type="protein sequence ID" value="CAR14027.1"/>
    <property type="molecule type" value="Genomic_DNA"/>
</dbReference>
<dbReference type="RefSeq" id="WP_001241357.1">
    <property type="nucleotide sequence ID" value="NC_011751.1"/>
</dbReference>
<dbReference type="RefSeq" id="YP_002413553.1">
    <property type="nucleotide sequence ID" value="NC_011751.1"/>
</dbReference>
<dbReference type="SMR" id="B7N6B8"/>
<dbReference type="STRING" id="585056.ECUMN_2851"/>
<dbReference type="GeneID" id="86947421"/>
<dbReference type="KEGG" id="eum:ECUMN_2851"/>
<dbReference type="PATRIC" id="fig|585056.7.peg.3038"/>
<dbReference type="HOGENOM" id="CLU_107144_0_0_6"/>
<dbReference type="Proteomes" id="UP000007097">
    <property type="component" value="Chromosome"/>
</dbReference>
<dbReference type="GO" id="GO:0005829">
    <property type="term" value="C:cytosol"/>
    <property type="evidence" value="ECO:0007669"/>
    <property type="project" value="TreeGrafter"/>
</dbReference>
<dbReference type="GO" id="GO:0051537">
    <property type="term" value="F:2 iron, 2 sulfur cluster binding"/>
    <property type="evidence" value="ECO:0007669"/>
    <property type="project" value="UniProtKB-KW"/>
</dbReference>
<dbReference type="GO" id="GO:0003700">
    <property type="term" value="F:DNA-binding transcription factor activity"/>
    <property type="evidence" value="ECO:0007669"/>
    <property type="project" value="UniProtKB-UniRule"/>
</dbReference>
<dbReference type="GO" id="GO:0003690">
    <property type="term" value="F:double-stranded DNA binding"/>
    <property type="evidence" value="ECO:0007669"/>
    <property type="project" value="UniProtKB-UniRule"/>
</dbReference>
<dbReference type="GO" id="GO:0005506">
    <property type="term" value="F:iron ion binding"/>
    <property type="evidence" value="ECO:0007669"/>
    <property type="project" value="UniProtKB-UniRule"/>
</dbReference>
<dbReference type="FunFam" id="1.10.10.10:FF:000026">
    <property type="entry name" value="HTH-type transcriptional regulator IscR"/>
    <property type="match status" value="1"/>
</dbReference>
<dbReference type="Gene3D" id="1.10.10.10">
    <property type="entry name" value="Winged helix-like DNA-binding domain superfamily/Winged helix DNA-binding domain"/>
    <property type="match status" value="1"/>
</dbReference>
<dbReference type="HAMAP" id="MF_01176">
    <property type="entry name" value="HTH_type_IscR"/>
    <property type="match status" value="1"/>
</dbReference>
<dbReference type="InterPro" id="IPR010242">
    <property type="entry name" value="TF_HTH_IscR"/>
</dbReference>
<dbReference type="InterPro" id="IPR030489">
    <property type="entry name" value="TR_Rrf2-type_CS"/>
</dbReference>
<dbReference type="InterPro" id="IPR000944">
    <property type="entry name" value="Tscrpt_reg_Rrf2"/>
</dbReference>
<dbReference type="InterPro" id="IPR036388">
    <property type="entry name" value="WH-like_DNA-bd_sf"/>
</dbReference>
<dbReference type="InterPro" id="IPR036390">
    <property type="entry name" value="WH_DNA-bd_sf"/>
</dbReference>
<dbReference type="NCBIfam" id="TIGR02010">
    <property type="entry name" value="IscR"/>
    <property type="match status" value="1"/>
</dbReference>
<dbReference type="NCBIfam" id="NF008110">
    <property type="entry name" value="PRK10857.1"/>
    <property type="match status" value="1"/>
</dbReference>
<dbReference type="NCBIfam" id="TIGR00738">
    <property type="entry name" value="rrf2_super"/>
    <property type="match status" value="1"/>
</dbReference>
<dbReference type="PANTHER" id="PTHR33221:SF5">
    <property type="entry name" value="HTH-TYPE TRANSCRIPTIONAL REGULATOR ISCR"/>
    <property type="match status" value="1"/>
</dbReference>
<dbReference type="PANTHER" id="PTHR33221">
    <property type="entry name" value="WINGED HELIX-TURN-HELIX TRANSCRIPTIONAL REGULATOR, RRF2 FAMILY"/>
    <property type="match status" value="1"/>
</dbReference>
<dbReference type="Pfam" id="PF02082">
    <property type="entry name" value="Rrf2"/>
    <property type="match status" value="1"/>
</dbReference>
<dbReference type="SUPFAM" id="SSF46785">
    <property type="entry name" value="Winged helix' DNA-binding domain"/>
    <property type="match status" value="1"/>
</dbReference>
<dbReference type="PROSITE" id="PS01332">
    <property type="entry name" value="HTH_RRF2_1"/>
    <property type="match status" value="1"/>
</dbReference>
<dbReference type="PROSITE" id="PS51197">
    <property type="entry name" value="HTH_RRF2_2"/>
    <property type="match status" value="1"/>
</dbReference>
<protein>
    <recommendedName>
        <fullName evidence="1">HTH-type transcriptional regulator IscR</fullName>
    </recommendedName>
</protein>
<keyword id="KW-0001">2Fe-2S</keyword>
<keyword id="KW-0010">Activator</keyword>
<keyword id="KW-0238">DNA-binding</keyword>
<keyword id="KW-0408">Iron</keyword>
<keyword id="KW-0411">Iron-sulfur</keyword>
<keyword id="KW-0479">Metal-binding</keyword>
<keyword id="KW-0678">Repressor</keyword>
<keyword id="KW-0804">Transcription</keyword>
<keyword id="KW-0805">Transcription regulation</keyword>
<sequence length="162" mass="17337">MRLTSKGRYAVTAMLDVALNSEAGPVPLADISERQGISLSYLEQLFSRLRKNGLVSSVRGPGGGYLLGKDASSIAVGEVISAVDESVDATRCQGKGGCQGGDKCLTHALWRDLSDRLTGFLNNITLGELVNNQEVLDVSGRQHTHDAPRTRTQDAIDVKLRA</sequence>